<sequence length="185" mass="21397">MLTLASKLKRDDGVKGSRTTSTTLDSMRRISVRDRLLVKEVAELEANLPCTCKVNFPDPNKLHYFHLTVSPDESYYQGGRFQFEIEVPDAYNMVPPKVKCLTRIWHPNITETGEICLSLLREHSIDGTGWAPTRTLKDVVWGLNSLFTDLLNFDDPLNIEAAEHHLRDKDEYRNKVEDYIKRYAR</sequence>
<reference key="1">
    <citation type="submission" date="2004-05" db="EMBL/GenBank/DDBJ databases">
        <authorList>
            <consortium name="NIH - Xenopus Gene Collection (XGC) project"/>
        </authorList>
    </citation>
    <scope>NUCLEOTIDE SEQUENCE [LARGE SCALE GENOMIC DNA]</scope>
    <source>
        <tissue>Embryo</tissue>
    </source>
</reference>
<dbReference type="EC" id="2.3.2.34" evidence="2"/>
<dbReference type="EMBL" id="BC070971">
    <property type="protein sequence ID" value="AAH70971.1"/>
    <property type="molecule type" value="mRNA"/>
</dbReference>
<dbReference type="RefSeq" id="NP_001085021.1">
    <property type="nucleotide sequence ID" value="NM_001091552.1"/>
</dbReference>
<dbReference type="SMR" id="Q6IRC7"/>
<dbReference type="DNASU" id="432085"/>
<dbReference type="GeneID" id="432085"/>
<dbReference type="KEGG" id="xla:432085"/>
<dbReference type="AGR" id="Xenbase:XB-GENE-960082"/>
<dbReference type="CTD" id="432085"/>
<dbReference type="Xenbase" id="XB-GENE-960082">
    <property type="gene designation" value="ube2f.S"/>
</dbReference>
<dbReference type="OMA" id="VMQYAKR"/>
<dbReference type="OrthoDB" id="10249039at2759"/>
<dbReference type="UniPathway" id="UPA00885"/>
<dbReference type="Proteomes" id="UP000186698">
    <property type="component" value="Chromosome 9_10S"/>
</dbReference>
<dbReference type="Bgee" id="432085">
    <property type="expression patterns" value="Expressed in muscle tissue and 20 other cell types or tissues"/>
</dbReference>
<dbReference type="GO" id="GO:0005524">
    <property type="term" value="F:ATP binding"/>
    <property type="evidence" value="ECO:0007669"/>
    <property type="project" value="UniProtKB-KW"/>
</dbReference>
<dbReference type="GO" id="GO:0061654">
    <property type="term" value="F:NEDD8 conjugating enzyme activity"/>
    <property type="evidence" value="ECO:0000250"/>
    <property type="project" value="UniProtKB"/>
</dbReference>
<dbReference type="GO" id="GO:0061663">
    <property type="term" value="F:NEDD8 ligase activity"/>
    <property type="evidence" value="ECO:0007669"/>
    <property type="project" value="UniProtKB-EC"/>
</dbReference>
<dbReference type="GO" id="GO:0045116">
    <property type="term" value="P:protein neddylation"/>
    <property type="evidence" value="ECO:0000250"/>
    <property type="project" value="UniProtKB"/>
</dbReference>
<dbReference type="CDD" id="cd23794">
    <property type="entry name" value="UBCc_UBE2F_UBE2M"/>
    <property type="match status" value="1"/>
</dbReference>
<dbReference type="FunFam" id="3.10.110.10:FF:000033">
    <property type="entry name" value="NEDD8-conjugating enzyme UBE2F"/>
    <property type="match status" value="1"/>
</dbReference>
<dbReference type="Gene3D" id="3.10.110.10">
    <property type="entry name" value="Ubiquitin Conjugating Enzyme"/>
    <property type="match status" value="1"/>
</dbReference>
<dbReference type="InterPro" id="IPR000608">
    <property type="entry name" value="UBQ-conjugat_E2_core"/>
</dbReference>
<dbReference type="InterPro" id="IPR023313">
    <property type="entry name" value="UBQ-conjugating_AS"/>
</dbReference>
<dbReference type="InterPro" id="IPR016135">
    <property type="entry name" value="UBQ-conjugating_enzyme/RWD"/>
</dbReference>
<dbReference type="PANTHER" id="PTHR24068">
    <property type="entry name" value="UBIQUITIN-CONJUGATING ENZYME E2"/>
    <property type="match status" value="1"/>
</dbReference>
<dbReference type="Pfam" id="PF00179">
    <property type="entry name" value="UQ_con"/>
    <property type="match status" value="1"/>
</dbReference>
<dbReference type="SMART" id="SM00212">
    <property type="entry name" value="UBCc"/>
    <property type="match status" value="1"/>
</dbReference>
<dbReference type="SUPFAM" id="SSF54495">
    <property type="entry name" value="UBC-like"/>
    <property type="match status" value="1"/>
</dbReference>
<dbReference type="PROSITE" id="PS00183">
    <property type="entry name" value="UBC_1"/>
    <property type="match status" value="1"/>
</dbReference>
<dbReference type="PROSITE" id="PS50127">
    <property type="entry name" value="UBC_2"/>
    <property type="match status" value="1"/>
</dbReference>
<keyword id="KW-0067">ATP-binding</keyword>
<keyword id="KW-0547">Nucleotide-binding</keyword>
<keyword id="KW-1185">Reference proteome</keyword>
<keyword id="KW-0808">Transferase</keyword>
<keyword id="KW-0833">Ubl conjugation pathway</keyword>
<proteinExistence type="evidence at transcript level"/>
<comment type="function">
    <text evidence="2">Accepts the ubiquitin-like protein NEDD8 from the UBA3-NAE1 E1 complex and catalyzes its covalent attachment to other proteins. Together with the E3 ubiquitin ligase rnf7/rbx2, specifically neddylates cullin-5 (cul5). Does not neddylate cul1, cul2, cul3, cul4a or cul4b.</text>
</comment>
<comment type="catalytic activity">
    <reaction evidence="2">
        <text>[E1 NEDD8-activating enzyme]-S-[NEDD8 protein]-yl-L-cysteine + [E2 NEDD8-conjugating enzyme]-L-cysteine = [E1 NEDD8-activating enzyme]-L-cysteine + [E2 NEDD8-conjugating enzyme]-S-[NEDD8-protein]-yl-L-cysteine.</text>
        <dbReference type="EC" id="2.3.2.34"/>
    </reaction>
</comment>
<comment type="pathway">
    <text evidence="2">Protein modification; protein neddylation.</text>
</comment>
<comment type="similarity">
    <text evidence="3">Belongs to the ubiquitin-conjugating enzyme family. UBE2F subfamily.</text>
</comment>
<gene>
    <name type="primary">ube2f</name>
</gene>
<feature type="chain" id="PRO_0000263081" description="NEDD8-conjugating enzyme UBE2F">
    <location>
        <begin position="1"/>
        <end position="185"/>
    </location>
</feature>
<feature type="domain" description="UBC core" evidence="3">
    <location>
        <begin position="32"/>
        <end position="185"/>
    </location>
</feature>
<feature type="region of interest" description="Interaction with uba3" evidence="1">
    <location>
        <begin position="1"/>
        <end position="29"/>
    </location>
</feature>
<feature type="region of interest" description="Disordered" evidence="5">
    <location>
        <begin position="1"/>
        <end position="21"/>
    </location>
</feature>
<feature type="active site" description="Glycyl thioester intermediate" evidence="3 4">
    <location>
        <position position="116"/>
    </location>
</feature>
<accession>Q6IRC7</accession>
<protein>
    <recommendedName>
        <fullName>NEDD8-conjugating enzyme UBE2F</fullName>
        <ecNumber evidence="2">2.3.2.34</ecNumber>
    </recommendedName>
    <alternativeName>
        <fullName>NEDD8 carrier protein UBE2F</fullName>
    </alternativeName>
    <alternativeName>
        <fullName>NEDD8-conjugating enzyme 2</fullName>
    </alternativeName>
    <alternativeName>
        <fullName>Ubiquitin-conjugating enzyme E2 F</fullName>
    </alternativeName>
</protein>
<organism>
    <name type="scientific">Xenopus laevis</name>
    <name type="common">African clawed frog</name>
    <dbReference type="NCBI Taxonomy" id="8355"/>
    <lineage>
        <taxon>Eukaryota</taxon>
        <taxon>Metazoa</taxon>
        <taxon>Chordata</taxon>
        <taxon>Craniata</taxon>
        <taxon>Vertebrata</taxon>
        <taxon>Euteleostomi</taxon>
        <taxon>Amphibia</taxon>
        <taxon>Batrachia</taxon>
        <taxon>Anura</taxon>
        <taxon>Pipoidea</taxon>
        <taxon>Pipidae</taxon>
        <taxon>Xenopodinae</taxon>
        <taxon>Xenopus</taxon>
        <taxon>Xenopus</taxon>
    </lineage>
</organism>
<evidence type="ECO:0000250" key="1"/>
<evidence type="ECO:0000250" key="2">
    <source>
        <dbReference type="UniProtKB" id="Q969M7"/>
    </source>
</evidence>
<evidence type="ECO:0000255" key="3">
    <source>
        <dbReference type="PROSITE-ProRule" id="PRU00388"/>
    </source>
</evidence>
<evidence type="ECO:0000255" key="4">
    <source>
        <dbReference type="PROSITE-ProRule" id="PRU10133"/>
    </source>
</evidence>
<evidence type="ECO:0000256" key="5">
    <source>
        <dbReference type="SAM" id="MobiDB-lite"/>
    </source>
</evidence>
<name>UBE2F_XENLA</name>